<proteinExistence type="inferred from homology"/>
<gene>
    <name evidence="1" type="primary">ung</name>
    <name type="ordered locus">Clos_0642</name>
</gene>
<accession>A8MM35</accession>
<evidence type="ECO:0000255" key="1">
    <source>
        <dbReference type="HAMAP-Rule" id="MF_00148"/>
    </source>
</evidence>
<comment type="function">
    <text evidence="1">Excises uracil residues from the DNA which can arise as a result of misincorporation of dUMP residues by DNA polymerase or due to deamination of cytosine.</text>
</comment>
<comment type="catalytic activity">
    <reaction evidence="1">
        <text>Hydrolyzes single-stranded DNA or mismatched double-stranded DNA and polynucleotides, releasing free uracil.</text>
        <dbReference type="EC" id="3.2.2.27"/>
    </reaction>
</comment>
<comment type="subcellular location">
    <subcellularLocation>
        <location evidence="1">Cytoplasm</location>
    </subcellularLocation>
</comment>
<comment type="similarity">
    <text evidence="1">Belongs to the uracil-DNA glycosylase (UDG) superfamily. UNG family.</text>
</comment>
<sequence>MGVIFENDWQELLKDEFEKEYYKKVRGFLVEEYRTKTIYPDKNHIFSALHYTAYKDVRVVILGQDPYHGPNQAHGLSFSVQPGVRIPPSLVNIYKELETDLGCYIPNHGYLKKWADQGVLLLNTSLTVRAGEANSHQKIGWEIFTDHIIQLLNDRKEPIVFILWGNNAISKERFITNPQHYIIKSVHPSPLSASRGFFGSKPFSKTNSFLESIGEKPIDWQIENR</sequence>
<keyword id="KW-0963">Cytoplasm</keyword>
<keyword id="KW-0227">DNA damage</keyword>
<keyword id="KW-0234">DNA repair</keyword>
<keyword id="KW-0378">Hydrolase</keyword>
<keyword id="KW-1185">Reference proteome</keyword>
<name>UNG_ALKOO</name>
<reference key="1">
    <citation type="submission" date="2007-10" db="EMBL/GenBank/DDBJ databases">
        <title>Complete genome of Alkaliphilus oremlandii OhILAs.</title>
        <authorList>
            <person name="Copeland A."/>
            <person name="Lucas S."/>
            <person name="Lapidus A."/>
            <person name="Barry K."/>
            <person name="Detter J.C."/>
            <person name="Glavina del Rio T."/>
            <person name="Hammon N."/>
            <person name="Israni S."/>
            <person name="Dalin E."/>
            <person name="Tice H."/>
            <person name="Pitluck S."/>
            <person name="Chain P."/>
            <person name="Malfatti S."/>
            <person name="Shin M."/>
            <person name="Vergez L."/>
            <person name="Schmutz J."/>
            <person name="Larimer F."/>
            <person name="Land M."/>
            <person name="Hauser L."/>
            <person name="Kyrpides N."/>
            <person name="Mikhailova N."/>
            <person name="Stolz J.F."/>
            <person name="Dawson A."/>
            <person name="Fisher E."/>
            <person name="Crable B."/>
            <person name="Perera E."/>
            <person name="Lisak J."/>
            <person name="Ranganathan M."/>
            <person name="Basu P."/>
            <person name="Richardson P."/>
        </authorList>
    </citation>
    <scope>NUCLEOTIDE SEQUENCE [LARGE SCALE GENOMIC DNA]</scope>
    <source>
        <strain>OhILAs</strain>
    </source>
</reference>
<feature type="chain" id="PRO_1000058123" description="Uracil-DNA glycosylase">
    <location>
        <begin position="1"/>
        <end position="225"/>
    </location>
</feature>
<feature type="active site" description="Proton acceptor" evidence="1">
    <location>
        <position position="65"/>
    </location>
</feature>
<organism>
    <name type="scientific">Alkaliphilus oremlandii (strain OhILAs)</name>
    <name type="common">Clostridium oremlandii (strain OhILAs)</name>
    <dbReference type="NCBI Taxonomy" id="350688"/>
    <lineage>
        <taxon>Bacteria</taxon>
        <taxon>Bacillati</taxon>
        <taxon>Bacillota</taxon>
        <taxon>Clostridia</taxon>
        <taxon>Peptostreptococcales</taxon>
        <taxon>Natronincolaceae</taxon>
        <taxon>Alkaliphilus</taxon>
    </lineage>
</organism>
<protein>
    <recommendedName>
        <fullName evidence="1">Uracil-DNA glycosylase</fullName>
        <shortName evidence="1">UDG</shortName>
        <ecNumber evidence="1">3.2.2.27</ecNumber>
    </recommendedName>
</protein>
<dbReference type="EC" id="3.2.2.27" evidence="1"/>
<dbReference type="EMBL" id="CP000853">
    <property type="protein sequence ID" value="ABW18202.1"/>
    <property type="molecule type" value="Genomic_DNA"/>
</dbReference>
<dbReference type="RefSeq" id="WP_012158516.1">
    <property type="nucleotide sequence ID" value="NC_009922.1"/>
</dbReference>
<dbReference type="SMR" id="A8MM35"/>
<dbReference type="STRING" id="350688.Clos_0642"/>
<dbReference type="KEGG" id="aoe:Clos_0642"/>
<dbReference type="eggNOG" id="COG0692">
    <property type="taxonomic scope" value="Bacteria"/>
</dbReference>
<dbReference type="HOGENOM" id="CLU_032162_3_1_9"/>
<dbReference type="OrthoDB" id="9804372at2"/>
<dbReference type="Proteomes" id="UP000000269">
    <property type="component" value="Chromosome"/>
</dbReference>
<dbReference type="GO" id="GO:0005737">
    <property type="term" value="C:cytoplasm"/>
    <property type="evidence" value="ECO:0007669"/>
    <property type="project" value="UniProtKB-SubCell"/>
</dbReference>
<dbReference type="GO" id="GO:0004844">
    <property type="term" value="F:uracil DNA N-glycosylase activity"/>
    <property type="evidence" value="ECO:0007669"/>
    <property type="project" value="UniProtKB-UniRule"/>
</dbReference>
<dbReference type="GO" id="GO:0097510">
    <property type="term" value="P:base-excision repair, AP site formation via deaminated base removal"/>
    <property type="evidence" value="ECO:0007669"/>
    <property type="project" value="TreeGrafter"/>
</dbReference>
<dbReference type="CDD" id="cd10027">
    <property type="entry name" value="UDG-F1-like"/>
    <property type="match status" value="1"/>
</dbReference>
<dbReference type="FunFam" id="3.40.470.10:FF:000001">
    <property type="entry name" value="Uracil-DNA glycosylase"/>
    <property type="match status" value="1"/>
</dbReference>
<dbReference type="Gene3D" id="3.40.470.10">
    <property type="entry name" value="Uracil-DNA glycosylase-like domain"/>
    <property type="match status" value="1"/>
</dbReference>
<dbReference type="HAMAP" id="MF_00148">
    <property type="entry name" value="UDG"/>
    <property type="match status" value="1"/>
</dbReference>
<dbReference type="InterPro" id="IPR002043">
    <property type="entry name" value="UDG_fam1"/>
</dbReference>
<dbReference type="InterPro" id="IPR018085">
    <property type="entry name" value="Ura-DNA_Glyclase_AS"/>
</dbReference>
<dbReference type="InterPro" id="IPR005122">
    <property type="entry name" value="Uracil-DNA_glycosylase-like"/>
</dbReference>
<dbReference type="InterPro" id="IPR036895">
    <property type="entry name" value="Uracil-DNA_glycosylase-like_sf"/>
</dbReference>
<dbReference type="NCBIfam" id="NF003588">
    <property type="entry name" value="PRK05254.1-1"/>
    <property type="match status" value="1"/>
</dbReference>
<dbReference type="NCBIfam" id="NF003589">
    <property type="entry name" value="PRK05254.1-2"/>
    <property type="match status" value="1"/>
</dbReference>
<dbReference type="NCBIfam" id="NF003591">
    <property type="entry name" value="PRK05254.1-4"/>
    <property type="match status" value="1"/>
</dbReference>
<dbReference type="NCBIfam" id="NF003592">
    <property type="entry name" value="PRK05254.1-5"/>
    <property type="match status" value="1"/>
</dbReference>
<dbReference type="NCBIfam" id="TIGR00628">
    <property type="entry name" value="ung"/>
    <property type="match status" value="1"/>
</dbReference>
<dbReference type="PANTHER" id="PTHR11264">
    <property type="entry name" value="URACIL-DNA GLYCOSYLASE"/>
    <property type="match status" value="1"/>
</dbReference>
<dbReference type="PANTHER" id="PTHR11264:SF0">
    <property type="entry name" value="URACIL-DNA GLYCOSYLASE"/>
    <property type="match status" value="1"/>
</dbReference>
<dbReference type="Pfam" id="PF03167">
    <property type="entry name" value="UDG"/>
    <property type="match status" value="1"/>
</dbReference>
<dbReference type="SMART" id="SM00986">
    <property type="entry name" value="UDG"/>
    <property type="match status" value="1"/>
</dbReference>
<dbReference type="SMART" id="SM00987">
    <property type="entry name" value="UreE_C"/>
    <property type="match status" value="1"/>
</dbReference>
<dbReference type="SUPFAM" id="SSF52141">
    <property type="entry name" value="Uracil-DNA glycosylase-like"/>
    <property type="match status" value="1"/>
</dbReference>
<dbReference type="PROSITE" id="PS00130">
    <property type="entry name" value="U_DNA_GLYCOSYLASE"/>
    <property type="match status" value="1"/>
</dbReference>